<reference key="1">
    <citation type="journal article" date="2007" name="Proc. Natl. Acad. Sci. U.S.A.">
        <title>Genome and proteome of long-chain alkane degrading Geobacillus thermodenitrificans NG80-2 isolated from a deep-subsurface oil reservoir.</title>
        <authorList>
            <person name="Feng L."/>
            <person name="Wang W."/>
            <person name="Cheng J."/>
            <person name="Ren Y."/>
            <person name="Zhao G."/>
            <person name="Gao C."/>
            <person name="Tang Y."/>
            <person name="Liu X."/>
            <person name="Han W."/>
            <person name="Peng X."/>
            <person name="Liu R."/>
            <person name="Wang L."/>
        </authorList>
    </citation>
    <scope>NUCLEOTIDE SEQUENCE [LARGE SCALE GENOMIC DNA]</scope>
    <source>
        <strain>NG80-2</strain>
    </source>
</reference>
<gene>
    <name evidence="1" type="primary">queC</name>
    <name type="ordered locus">GTNG_0863</name>
</gene>
<accession>A4ILN7</accession>
<evidence type="ECO:0000255" key="1">
    <source>
        <dbReference type="HAMAP-Rule" id="MF_01633"/>
    </source>
</evidence>
<evidence type="ECO:0000305" key="2"/>
<feature type="chain" id="PRO_0000336913" description="7-cyano-7-deazaguanine synthase">
    <location>
        <begin position="1"/>
        <end position="221"/>
    </location>
</feature>
<feature type="binding site" evidence="1">
    <location>
        <begin position="10"/>
        <end position="20"/>
    </location>
    <ligand>
        <name>ATP</name>
        <dbReference type="ChEBI" id="CHEBI:30616"/>
    </ligand>
</feature>
<feature type="binding site" evidence="1">
    <location>
        <position position="186"/>
    </location>
    <ligand>
        <name>Zn(2+)</name>
        <dbReference type="ChEBI" id="CHEBI:29105"/>
    </ligand>
</feature>
<feature type="binding site" evidence="1">
    <location>
        <position position="195"/>
    </location>
    <ligand>
        <name>Zn(2+)</name>
        <dbReference type="ChEBI" id="CHEBI:29105"/>
    </ligand>
</feature>
<feature type="binding site" evidence="1">
    <location>
        <position position="198"/>
    </location>
    <ligand>
        <name>Zn(2+)</name>
        <dbReference type="ChEBI" id="CHEBI:29105"/>
    </ligand>
</feature>
<feature type="binding site" evidence="1">
    <location>
        <position position="201"/>
    </location>
    <ligand>
        <name>Zn(2+)</name>
        <dbReference type="ChEBI" id="CHEBI:29105"/>
    </ligand>
</feature>
<proteinExistence type="inferred from homology"/>
<dbReference type="EC" id="6.3.4.20" evidence="1"/>
<dbReference type="EMBL" id="CP000557">
    <property type="protein sequence ID" value="ABO66241.1"/>
    <property type="status" value="ALT_INIT"/>
    <property type="molecule type" value="Genomic_DNA"/>
</dbReference>
<dbReference type="RefSeq" id="WP_011887050.1">
    <property type="nucleotide sequence ID" value="NC_009328.1"/>
</dbReference>
<dbReference type="SMR" id="A4ILN7"/>
<dbReference type="GeneID" id="87621542"/>
<dbReference type="KEGG" id="gtn:GTNG_0863"/>
<dbReference type="eggNOG" id="COG0603">
    <property type="taxonomic scope" value="Bacteria"/>
</dbReference>
<dbReference type="HOGENOM" id="CLU_081854_0_0_9"/>
<dbReference type="UniPathway" id="UPA00391"/>
<dbReference type="Proteomes" id="UP000001578">
    <property type="component" value="Chromosome"/>
</dbReference>
<dbReference type="GO" id="GO:0005524">
    <property type="term" value="F:ATP binding"/>
    <property type="evidence" value="ECO:0007669"/>
    <property type="project" value="UniProtKB-UniRule"/>
</dbReference>
<dbReference type="GO" id="GO:0016879">
    <property type="term" value="F:ligase activity, forming carbon-nitrogen bonds"/>
    <property type="evidence" value="ECO:0007669"/>
    <property type="project" value="UniProtKB-UniRule"/>
</dbReference>
<dbReference type="GO" id="GO:0008270">
    <property type="term" value="F:zinc ion binding"/>
    <property type="evidence" value="ECO:0007669"/>
    <property type="project" value="UniProtKB-UniRule"/>
</dbReference>
<dbReference type="GO" id="GO:0008616">
    <property type="term" value="P:queuosine biosynthetic process"/>
    <property type="evidence" value="ECO:0007669"/>
    <property type="project" value="UniProtKB-UniRule"/>
</dbReference>
<dbReference type="CDD" id="cd01995">
    <property type="entry name" value="QueC-like"/>
    <property type="match status" value="1"/>
</dbReference>
<dbReference type="FunFam" id="3.40.50.620:FF:000017">
    <property type="entry name" value="7-cyano-7-deazaguanine synthase"/>
    <property type="match status" value="1"/>
</dbReference>
<dbReference type="Gene3D" id="3.40.50.620">
    <property type="entry name" value="HUPs"/>
    <property type="match status" value="1"/>
</dbReference>
<dbReference type="HAMAP" id="MF_01633">
    <property type="entry name" value="QueC"/>
    <property type="match status" value="1"/>
</dbReference>
<dbReference type="InterPro" id="IPR018317">
    <property type="entry name" value="QueC"/>
</dbReference>
<dbReference type="InterPro" id="IPR014729">
    <property type="entry name" value="Rossmann-like_a/b/a_fold"/>
</dbReference>
<dbReference type="NCBIfam" id="TIGR00364">
    <property type="entry name" value="7-cyano-7-deazaguanine synthase QueC"/>
    <property type="match status" value="1"/>
</dbReference>
<dbReference type="PANTHER" id="PTHR42914">
    <property type="entry name" value="7-CYANO-7-DEAZAGUANINE SYNTHASE"/>
    <property type="match status" value="1"/>
</dbReference>
<dbReference type="PANTHER" id="PTHR42914:SF1">
    <property type="entry name" value="7-CYANO-7-DEAZAGUANINE SYNTHASE"/>
    <property type="match status" value="1"/>
</dbReference>
<dbReference type="Pfam" id="PF06508">
    <property type="entry name" value="QueC"/>
    <property type="match status" value="1"/>
</dbReference>
<dbReference type="PIRSF" id="PIRSF006293">
    <property type="entry name" value="ExsB"/>
    <property type="match status" value="1"/>
</dbReference>
<dbReference type="SUPFAM" id="SSF52402">
    <property type="entry name" value="Adenine nucleotide alpha hydrolases-like"/>
    <property type="match status" value="1"/>
</dbReference>
<organism>
    <name type="scientific">Geobacillus thermodenitrificans (strain NG80-2)</name>
    <dbReference type="NCBI Taxonomy" id="420246"/>
    <lineage>
        <taxon>Bacteria</taxon>
        <taxon>Bacillati</taxon>
        <taxon>Bacillota</taxon>
        <taxon>Bacilli</taxon>
        <taxon>Bacillales</taxon>
        <taxon>Anoxybacillaceae</taxon>
        <taxon>Geobacillus</taxon>
    </lineage>
</organism>
<sequence length="221" mass="24538">MNEEKAVVVFSGGQDSTTCLFWAKKQFAEVEAVTFDYGQRHRREIEVAASIADELGVRHTVLDMSLLGQLAPNALTRGEIAIEQKEGELPTTFVDGRNLLFLSFAAVLAKQRGARHIVTGVCETDFSGYPDCRDIFIKSLNVTLNLAMDYPFVIHTPLMWLTKAETWKLADELGALEFVRTKTLTCYNGVIADGCGECPACVLRKRGLEEYLQEKAGVKAR</sequence>
<comment type="function">
    <text evidence="1">Catalyzes the ATP-dependent conversion of 7-carboxy-7-deazaguanine (CDG) to 7-cyano-7-deazaguanine (preQ(0)).</text>
</comment>
<comment type="catalytic activity">
    <reaction evidence="1">
        <text>7-carboxy-7-deazaguanine + NH4(+) + ATP = 7-cyano-7-deazaguanine + ADP + phosphate + H2O + H(+)</text>
        <dbReference type="Rhea" id="RHEA:27982"/>
        <dbReference type="ChEBI" id="CHEBI:15377"/>
        <dbReference type="ChEBI" id="CHEBI:15378"/>
        <dbReference type="ChEBI" id="CHEBI:28938"/>
        <dbReference type="ChEBI" id="CHEBI:30616"/>
        <dbReference type="ChEBI" id="CHEBI:43474"/>
        <dbReference type="ChEBI" id="CHEBI:45075"/>
        <dbReference type="ChEBI" id="CHEBI:61036"/>
        <dbReference type="ChEBI" id="CHEBI:456216"/>
        <dbReference type="EC" id="6.3.4.20"/>
    </reaction>
</comment>
<comment type="cofactor">
    <cofactor evidence="1">
        <name>Zn(2+)</name>
        <dbReference type="ChEBI" id="CHEBI:29105"/>
    </cofactor>
    <text evidence="1">Binds 1 zinc ion per subunit.</text>
</comment>
<comment type="pathway">
    <text evidence="1">Purine metabolism; 7-cyano-7-deazaguanine biosynthesis.</text>
</comment>
<comment type="subunit">
    <text evidence="1">Homodimer.</text>
</comment>
<comment type="similarity">
    <text evidence="1">Belongs to the QueC family.</text>
</comment>
<comment type="sequence caution" evidence="2">
    <conflict type="erroneous initiation">
        <sequence resource="EMBL-CDS" id="ABO66241"/>
    </conflict>
</comment>
<keyword id="KW-0067">ATP-binding</keyword>
<keyword id="KW-0436">Ligase</keyword>
<keyword id="KW-0479">Metal-binding</keyword>
<keyword id="KW-0547">Nucleotide-binding</keyword>
<keyword id="KW-0671">Queuosine biosynthesis</keyword>
<keyword id="KW-0862">Zinc</keyword>
<name>QUEC_GEOTN</name>
<protein>
    <recommendedName>
        <fullName evidence="1">7-cyano-7-deazaguanine synthase</fullName>
        <ecNumber evidence="1">6.3.4.20</ecNumber>
    </recommendedName>
    <alternativeName>
        <fullName evidence="1">7-cyano-7-carbaguanine synthase</fullName>
    </alternativeName>
    <alternativeName>
        <fullName evidence="1">PreQ(0) synthase</fullName>
    </alternativeName>
    <alternativeName>
        <fullName evidence="1">Queuosine biosynthesis protein QueC</fullName>
    </alternativeName>
</protein>